<keyword id="KW-0067">ATP-binding</keyword>
<keyword id="KW-0963">Cytoplasm</keyword>
<keyword id="KW-0315">Glutamine amidotransferase</keyword>
<keyword id="KW-0436">Ligase</keyword>
<keyword id="KW-0460">Magnesium</keyword>
<keyword id="KW-0479">Metal-binding</keyword>
<keyword id="KW-0547">Nucleotide-binding</keyword>
<keyword id="KW-0658">Purine biosynthesis</keyword>
<keyword id="KW-1185">Reference proteome</keyword>
<evidence type="ECO:0000255" key="1">
    <source>
        <dbReference type="HAMAP-Rule" id="MF_00419"/>
    </source>
</evidence>
<evidence type="ECO:0000256" key="2">
    <source>
        <dbReference type="SAM" id="MobiDB-lite"/>
    </source>
</evidence>
<dbReference type="EC" id="6.3.5.3" evidence="1"/>
<dbReference type="EMBL" id="BX950851">
    <property type="protein sequence ID" value="CAG76156.1"/>
    <property type="molecule type" value="Genomic_DNA"/>
</dbReference>
<dbReference type="RefSeq" id="WP_011094776.1">
    <property type="nucleotide sequence ID" value="NC_004547.2"/>
</dbReference>
<dbReference type="SMR" id="Q6D238"/>
<dbReference type="STRING" id="218491.ECA3258"/>
<dbReference type="GeneID" id="57209942"/>
<dbReference type="KEGG" id="eca:ECA3258"/>
<dbReference type="PATRIC" id="fig|218491.5.peg.3302"/>
<dbReference type="eggNOG" id="COG0046">
    <property type="taxonomic scope" value="Bacteria"/>
</dbReference>
<dbReference type="eggNOG" id="COG0047">
    <property type="taxonomic scope" value="Bacteria"/>
</dbReference>
<dbReference type="HOGENOM" id="CLU_001031_0_2_6"/>
<dbReference type="OrthoDB" id="9804441at2"/>
<dbReference type="UniPathway" id="UPA00074">
    <property type="reaction ID" value="UER00128"/>
</dbReference>
<dbReference type="Proteomes" id="UP000007966">
    <property type="component" value="Chromosome"/>
</dbReference>
<dbReference type="GO" id="GO:0005737">
    <property type="term" value="C:cytoplasm"/>
    <property type="evidence" value="ECO:0007669"/>
    <property type="project" value="UniProtKB-SubCell"/>
</dbReference>
<dbReference type="GO" id="GO:0005524">
    <property type="term" value="F:ATP binding"/>
    <property type="evidence" value="ECO:0007669"/>
    <property type="project" value="UniProtKB-UniRule"/>
</dbReference>
<dbReference type="GO" id="GO:0046872">
    <property type="term" value="F:metal ion binding"/>
    <property type="evidence" value="ECO:0007669"/>
    <property type="project" value="UniProtKB-KW"/>
</dbReference>
<dbReference type="GO" id="GO:0004642">
    <property type="term" value="F:phosphoribosylformylglycinamidine synthase activity"/>
    <property type="evidence" value="ECO:0007669"/>
    <property type="project" value="UniProtKB-UniRule"/>
</dbReference>
<dbReference type="GO" id="GO:0006189">
    <property type="term" value="P:'de novo' IMP biosynthetic process"/>
    <property type="evidence" value="ECO:0007669"/>
    <property type="project" value="UniProtKB-UniRule"/>
</dbReference>
<dbReference type="CDD" id="cd01740">
    <property type="entry name" value="GATase1_FGAR_AT"/>
    <property type="match status" value="1"/>
</dbReference>
<dbReference type="CDD" id="cd02203">
    <property type="entry name" value="PurL_repeat1"/>
    <property type="match status" value="1"/>
</dbReference>
<dbReference type="FunFam" id="1.10.8.750:FF:000002">
    <property type="entry name" value="Phosphoribosylformylglycinamidine synthase"/>
    <property type="match status" value="1"/>
</dbReference>
<dbReference type="FunFam" id="3.30.1330.10:FF:000002">
    <property type="entry name" value="Phosphoribosylformylglycinamidine synthase"/>
    <property type="match status" value="1"/>
</dbReference>
<dbReference type="FunFam" id="3.30.1330.10:FF:000005">
    <property type="entry name" value="Phosphoribosylformylglycinamidine synthase"/>
    <property type="match status" value="1"/>
</dbReference>
<dbReference type="FunFam" id="3.40.50.880:FF:000008">
    <property type="entry name" value="Phosphoribosylformylglycinamidine synthase"/>
    <property type="match status" value="1"/>
</dbReference>
<dbReference type="FunFam" id="3.90.650.10:FF:000002">
    <property type="entry name" value="Phosphoribosylformylglycinamidine synthase"/>
    <property type="match status" value="1"/>
</dbReference>
<dbReference type="FunFam" id="3.90.650.10:FF:000005">
    <property type="entry name" value="Phosphoribosylformylglycinamidine synthase"/>
    <property type="match status" value="1"/>
</dbReference>
<dbReference type="Gene3D" id="3.40.50.880">
    <property type="match status" value="1"/>
</dbReference>
<dbReference type="Gene3D" id="1.10.8.750">
    <property type="entry name" value="Phosphoribosylformylglycinamidine synthase, linker domain"/>
    <property type="match status" value="1"/>
</dbReference>
<dbReference type="Gene3D" id="3.90.650.10">
    <property type="entry name" value="PurM-like C-terminal domain"/>
    <property type="match status" value="2"/>
</dbReference>
<dbReference type="Gene3D" id="3.30.1330.10">
    <property type="entry name" value="PurM-like, N-terminal domain"/>
    <property type="match status" value="2"/>
</dbReference>
<dbReference type="HAMAP" id="MF_00419">
    <property type="entry name" value="PurL_1"/>
    <property type="match status" value="1"/>
</dbReference>
<dbReference type="InterPro" id="IPR029062">
    <property type="entry name" value="Class_I_gatase-like"/>
</dbReference>
<dbReference type="InterPro" id="IPR040707">
    <property type="entry name" value="FGAR-AT_N"/>
</dbReference>
<dbReference type="InterPro" id="IPR055181">
    <property type="entry name" value="FGAR-AT_PurM_N-like"/>
</dbReference>
<dbReference type="InterPro" id="IPR010073">
    <property type="entry name" value="PurL_large"/>
</dbReference>
<dbReference type="InterPro" id="IPR041609">
    <property type="entry name" value="PurL_linker"/>
</dbReference>
<dbReference type="InterPro" id="IPR010918">
    <property type="entry name" value="PurM-like_C_dom"/>
</dbReference>
<dbReference type="InterPro" id="IPR036676">
    <property type="entry name" value="PurM-like_C_sf"/>
</dbReference>
<dbReference type="InterPro" id="IPR036921">
    <property type="entry name" value="PurM-like_N_sf"/>
</dbReference>
<dbReference type="InterPro" id="IPR036604">
    <property type="entry name" value="PurS-like_sf"/>
</dbReference>
<dbReference type="NCBIfam" id="TIGR01735">
    <property type="entry name" value="FGAM_synt"/>
    <property type="match status" value="1"/>
</dbReference>
<dbReference type="NCBIfam" id="NF003672">
    <property type="entry name" value="PRK05297.1"/>
    <property type="match status" value="1"/>
</dbReference>
<dbReference type="PANTHER" id="PTHR10099">
    <property type="entry name" value="PHOSPHORIBOSYLFORMYLGLYCINAMIDINE SYNTHASE"/>
    <property type="match status" value="1"/>
</dbReference>
<dbReference type="PANTHER" id="PTHR10099:SF1">
    <property type="entry name" value="PHOSPHORIBOSYLFORMYLGLYCINAMIDINE SYNTHASE"/>
    <property type="match status" value="1"/>
</dbReference>
<dbReference type="Pfam" id="PF02769">
    <property type="entry name" value="AIRS_C"/>
    <property type="match status" value="2"/>
</dbReference>
<dbReference type="Pfam" id="PF18072">
    <property type="entry name" value="FGAR-AT_linker"/>
    <property type="match status" value="1"/>
</dbReference>
<dbReference type="Pfam" id="PF18076">
    <property type="entry name" value="FGAR-AT_N"/>
    <property type="match status" value="1"/>
</dbReference>
<dbReference type="Pfam" id="PF22689">
    <property type="entry name" value="FGAR-AT_PurM_N-like"/>
    <property type="match status" value="1"/>
</dbReference>
<dbReference type="Pfam" id="PF13507">
    <property type="entry name" value="GATase_5"/>
    <property type="match status" value="1"/>
</dbReference>
<dbReference type="SMART" id="SM01211">
    <property type="entry name" value="GATase_5"/>
    <property type="match status" value="1"/>
</dbReference>
<dbReference type="SUPFAM" id="SSF52317">
    <property type="entry name" value="Class I glutamine amidotransferase-like"/>
    <property type="match status" value="1"/>
</dbReference>
<dbReference type="SUPFAM" id="SSF109736">
    <property type="entry name" value="FGAM synthase PurL, linker domain"/>
    <property type="match status" value="1"/>
</dbReference>
<dbReference type="SUPFAM" id="SSF56042">
    <property type="entry name" value="PurM C-terminal domain-like"/>
    <property type="match status" value="2"/>
</dbReference>
<dbReference type="SUPFAM" id="SSF55326">
    <property type="entry name" value="PurM N-terminal domain-like"/>
    <property type="match status" value="2"/>
</dbReference>
<dbReference type="SUPFAM" id="SSF82697">
    <property type="entry name" value="PurS-like"/>
    <property type="match status" value="1"/>
</dbReference>
<dbReference type="PROSITE" id="PS51273">
    <property type="entry name" value="GATASE_TYPE_1"/>
    <property type="match status" value="1"/>
</dbReference>
<gene>
    <name evidence="1" type="primary">purL</name>
    <name type="ordered locus">ECA3258</name>
</gene>
<accession>Q6D238</accession>
<name>PUR4_PECAS</name>
<comment type="function">
    <text evidence="1">Phosphoribosylformylglycinamidine synthase involved in the purines biosynthetic pathway. Catalyzes the ATP-dependent conversion of formylglycinamide ribonucleotide (FGAR) and glutamine to yield formylglycinamidine ribonucleotide (FGAM) and glutamate.</text>
</comment>
<comment type="catalytic activity">
    <reaction evidence="1">
        <text>N(2)-formyl-N(1)-(5-phospho-beta-D-ribosyl)glycinamide + L-glutamine + ATP + H2O = 2-formamido-N(1)-(5-O-phospho-beta-D-ribosyl)acetamidine + L-glutamate + ADP + phosphate + H(+)</text>
        <dbReference type="Rhea" id="RHEA:17129"/>
        <dbReference type="ChEBI" id="CHEBI:15377"/>
        <dbReference type="ChEBI" id="CHEBI:15378"/>
        <dbReference type="ChEBI" id="CHEBI:29985"/>
        <dbReference type="ChEBI" id="CHEBI:30616"/>
        <dbReference type="ChEBI" id="CHEBI:43474"/>
        <dbReference type="ChEBI" id="CHEBI:58359"/>
        <dbReference type="ChEBI" id="CHEBI:147286"/>
        <dbReference type="ChEBI" id="CHEBI:147287"/>
        <dbReference type="ChEBI" id="CHEBI:456216"/>
        <dbReference type="EC" id="6.3.5.3"/>
    </reaction>
</comment>
<comment type="pathway">
    <text evidence="1">Purine metabolism; IMP biosynthesis via de novo pathway; 5-amino-1-(5-phospho-D-ribosyl)imidazole from N(2)-formyl-N(1)-(5-phospho-D-ribosyl)glycinamide: step 1/2.</text>
</comment>
<comment type="subunit">
    <text evidence="1">Monomer.</text>
</comment>
<comment type="subcellular location">
    <subcellularLocation>
        <location evidence="1">Cytoplasm</location>
    </subcellularLocation>
</comment>
<comment type="similarity">
    <text evidence="1">In the N-terminal section; belongs to the FGAMS family.</text>
</comment>
<protein>
    <recommendedName>
        <fullName evidence="1">Phosphoribosylformylglycinamidine synthase</fullName>
        <shortName evidence="1">FGAM synthase</shortName>
        <shortName evidence="1">FGAMS</shortName>
        <ecNumber evidence="1">6.3.5.3</ecNumber>
    </recommendedName>
    <alternativeName>
        <fullName evidence="1">Formylglycinamide ribonucleotide amidotransferase</fullName>
        <shortName evidence="1">FGAR amidotransferase</shortName>
        <shortName evidence="1">FGAR-AT</shortName>
    </alternativeName>
</protein>
<reference key="1">
    <citation type="journal article" date="2004" name="Proc. Natl. Acad. Sci. U.S.A.">
        <title>Genome sequence of the enterobacterial phytopathogen Erwinia carotovora subsp. atroseptica and characterization of virulence factors.</title>
        <authorList>
            <person name="Bell K.S."/>
            <person name="Sebaihia M."/>
            <person name="Pritchard L."/>
            <person name="Holden M.T.G."/>
            <person name="Hyman L.J."/>
            <person name="Holeva M.C."/>
            <person name="Thomson N.R."/>
            <person name="Bentley S.D."/>
            <person name="Churcher L.J.C."/>
            <person name="Mungall K."/>
            <person name="Atkin R."/>
            <person name="Bason N."/>
            <person name="Brooks K."/>
            <person name="Chillingworth T."/>
            <person name="Clark K."/>
            <person name="Doggett J."/>
            <person name="Fraser A."/>
            <person name="Hance Z."/>
            <person name="Hauser H."/>
            <person name="Jagels K."/>
            <person name="Moule S."/>
            <person name="Norbertczak H."/>
            <person name="Ormond D."/>
            <person name="Price C."/>
            <person name="Quail M.A."/>
            <person name="Sanders M."/>
            <person name="Walker D."/>
            <person name="Whitehead S."/>
            <person name="Salmond G.P.C."/>
            <person name="Birch P.R.J."/>
            <person name="Parkhill J."/>
            <person name="Toth I.K."/>
        </authorList>
    </citation>
    <scope>NUCLEOTIDE SEQUENCE [LARGE SCALE GENOMIC DNA]</scope>
    <source>
        <strain>SCRI 1043 / ATCC BAA-672</strain>
    </source>
</reference>
<sequence>MEILRGSPALSAFRINKLLVRCKEHLLPVSDIYAEYVHFADVSTPLNNDEQAKLTRLLKYGPSLAEHEPQGHLLLVTPRPGTISPWSSKATDIAHNCGLSKVLRLERGLAFYIHAPTLNDEQWQQLGALLHDRMMESVFSDLKQAAALFSHHQPAPFKRIEILLQGRQALEEANVRLGLALAEDEIDYLLEAFNNLGRNPTDIELYMFAQANSEHCRHKIFNADWVIDGVTQPKSLFKMIKNTFEHTPDHVLSAYKDNAAVMEGSAVGRFYTDANGQYDYHQEDAHILMKVETHNHPTAISPWPGAATGSGGEIRDEGATGRGSKPKAGLVGFSVSNLRIPGFIQPWEEEFGKPDRIVSALDIMTEGPLGGAAFNNEFGRPALTGYFRTYEERVDSHNGEELRGYHKPIMLAGGIGNIRGDHVKKGEIIVGAKLIVLGGPSMNIGLGGGAASSMASGQSDADLDFASVQRDNPEMERRCQEVIDRCWQLGEANPILFIHDVGAGGLSNAMPELVSDGGRGGRFELRDILNDEPGMSPLEVWCNESQERYVLAVAPEQLAQFDEICRRERAPYAVIGEATEELHLTMNDRHFNNQPIDLPLDVLLGKTPKMLRDVERKQVEGTPLQRDDIYLAEAVERVLHLPVVAEKTFLITIGDRSVTGMVARDQMVGPWQVPVADCAVTTASLDSYYGEAMSIGERAPVALRNFAASARLAVGEALTNIAATHIGPLTRVKLSANWMAAAGHPGEDAGLYDAVKAVGEELCPALGLTIPVGKDSMSMKTRWQEEGEDRAVTSPMSLVISAFARVEDVRNTVTPQLRTGQDNALLLIDLGAGNKALGATALAQVYRQLGRKTADVHSPEQLAGFFNAIQELVAAKALLAYHDRSDGGLIVTLAEMAFAGHCGVTVDIASQGEDTLATLFNEELGAVIQIPAARRAEVDAILALHGLADCVHYLGQAEEGTRFTINQGAEAVYQESRSTLRRWWAETSWQMQRLRDNPQCADQEHIARQDDNDPGLNVSLTFDPKEDIAAPYIAKNVRPKVAVLREQGVNSHVEMAAAFHRAGFDAIDIHMSDLLANRRNLQDFQALVACGGFSYGDVLGAGEGWAKSILFNARVRDEFAEFFLRPQTLALGVCNGCQMMSNLRELIPGADLWPRFVRNKSDRFEARFSLVEVDKSPSLFMNDMAGSRMPIAVSHGEGQVEVRDDAHLAAIEEHGLVALRYINHYGQVTENYPANPNGSSNGITAVTSTSGRATVMMPHPERVFRTVSNSWHPEEWGEDGPWMRMFRNARRQLG</sequence>
<organism>
    <name type="scientific">Pectobacterium atrosepticum (strain SCRI 1043 / ATCC BAA-672)</name>
    <name type="common">Erwinia carotovora subsp. atroseptica</name>
    <dbReference type="NCBI Taxonomy" id="218491"/>
    <lineage>
        <taxon>Bacteria</taxon>
        <taxon>Pseudomonadati</taxon>
        <taxon>Pseudomonadota</taxon>
        <taxon>Gammaproteobacteria</taxon>
        <taxon>Enterobacterales</taxon>
        <taxon>Pectobacteriaceae</taxon>
        <taxon>Pectobacterium</taxon>
    </lineage>
</organism>
<feature type="chain" id="PRO_0000264572" description="Phosphoribosylformylglycinamidine synthase">
    <location>
        <begin position="1"/>
        <end position="1294"/>
    </location>
</feature>
<feature type="domain" description="Glutamine amidotransferase type-1" evidence="1">
    <location>
        <begin position="1041"/>
        <end position="1294"/>
    </location>
</feature>
<feature type="region of interest" description="Disordered" evidence="2">
    <location>
        <begin position="303"/>
        <end position="325"/>
    </location>
</feature>
<feature type="active site" description="Nucleophile" evidence="1">
    <location>
        <position position="1134"/>
    </location>
</feature>
<feature type="active site" evidence="1">
    <location>
        <position position="1259"/>
    </location>
</feature>
<feature type="active site" evidence="1">
    <location>
        <position position="1261"/>
    </location>
</feature>
<feature type="binding site" evidence="1">
    <location>
        <begin position="305"/>
        <end position="316"/>
    </location>
    <ligand>
        <name>ATP</name>
        <dbReference type="ChEBI" id="CHEBI:30616"/>
    </ligand>
</feature>
<feature type="binding site" evidence="1">
    <location>
        <begin position="384"/>
        <end position="386"/>
    </location>
    <ligand>
        <name>ATP</name>
        <dbReference type="ChEBI" id="CHEBI:30616"/>
    </ligand>
</feature>
<feature type="binding site" evidence="1">
    <location>
        <position position="676"/>
    </location>
    <ligand>
        <name>ATP</name>
        <dbReference type="ChEBI" id="CHEBI:30616"/>
    </ligand>
</feature>
<feature type="binding site" evidence="1">
    <location>
        <position position="677"/>
    </location>
    <ligand>
        <name>Mg(2+)</name>
        <dbReference type="ChEBI" id="CHEBI:18420"/>
    </ligand>
</feature>
<feature type="binding site" evidence="1">
    <location>
        <position position="716"/>
    </location>
    <ligand>
        <name>Mg(2+)</name>
        <dbReference type="ChEBI" id="CHEBI:18420"/>
    </ligand>
</feature>
<feature type="binding site" evidence="1">
    <location>
        <position position="720"/>
    </location>
    <ligand>
        <name>Mg(2+)</name>
        <dbReference type="ChEBI" id="CHEBI:18420"/>
    </ligand>
</feature>
<feature type="binding site" evidence="1">
    <location>
        <position position="883"/>
    </location>
    <ligand>
        <name>Mg(2+)</name>
        <dbReference type="ChEBI" id="CHEBI:18420"/>
    </ligand>
</feature>
<feature type="binding site" evidence="1">
    <location>
        <position position="885"/>
    </location>
    <ligand>
        <name>ATP</name>
        <dbReference type="ChEBI" id="CHEBI:30616"/>
    </ligand>
</feature>
<proteinExistence type="inferred from homology"/>